<gene>
    <name evidence="1" type="primary">lexA</name>
    <name type="ordered locus">EFER_4134</name>
</gene>
<feature type="chain" id="PRO_1000192770" description="LexA repressor">
    <location>
        <begin position="1"/>
        <end position="202"/>
    </location>
</feature>
<feature type="DNA-binding region" description="H-T-H motif" evidence="1">
    <location>
        <begin position="28"/>
        <end position="48"/>
    </location>
</feature>
<feature type="active site" description="For autocatalytic cleavage activity" evidence="1">
    <location>
        <position position="119"/>
    </location>
</feature>
<feature type="active site" description="For autocatalytic cleavage activity" evidence="1">
    <location>
        <position position="156"/>
    </location>
</feature>
<feature type="site" description="Cleavage; by autolysis" evidence="1">
    <location>
        <begin position="84"/>
        <end position="85"/>
    </location>
</feature>
<keyword id="KW-0068">Autocatalytic cleavage</keyword>
<keyword id="KW-0227">DNA damage</keyword>
<keyword id="KW-0234">DNA repair</keyword>
<keyword id="KW-0235">DNA replication</keyword>
<keyword id="KW-0238">DNA-binding</keyword>
<keyword id="KW-0378">Hydrolase</keyword>
<keyword id="KW-0678">Repressor</keyword>
<keyword id="KW-0742">SOS response</keyword>
<keyword id="KW-0804">Transcription</keyword>
<keyword id="KW-0805">Transcription regulation</keyword>
<evidence type="ECO:0000255" key="1">
    <source>
        <dbReference type="HAMAP-Rule" id="MF_00015"/>
    </source>
</evidence>
<name>LEXA_ESCF3</name>
<comment type="function">
    <text evidence="1">Represses a number of genes involved in the response to DNA damage (SOS response), including recA and lexA. Binds to the 16 bp palindromic sequence 5'-CTGTATATATATACAG-3'. In the presence of single-stranded DNA, RecA interacts with LexA causing an autocatalytic cleavage which disrupts the DNA-binding part of LexA, leading to derepression of the SOS regulon and eventually DNA repair.</text>
</comment>
<comment type="catalytic activity">
    <reaction evidence="1">
        <text>Hydrolysis of Ala-|-Gly bond in repressor LexA.</text>
        <dbReference type="EC" id="3.4.21.88"/>
    </reaction>
</comment>
<comment type="subunit">
    <text evidence="1">Homodimer.</text>
</comment>
<comment type="similarity">
    <text evidence="1">Belongs to the peptidase S24 family.</text>
</comment>
<accession>B7LL15</accession>
<reference key="1">
    <citation type="journal article" date="2009" name="PLoS Genet.">
        <title>Organised genome dynamics in the Escherichia coli species results in highly diverse adaptive paths.</title>
        <authorList>
            <person name="Touchon M."/>
            <person name="Hoede C."/>
            <person name="Tenaillon O."/>
            <person name="Barbe V."/>
            <person name="Baeriswyl S."/>
            <person name="Bidet P."/>
            <person name="Bingen E."/>
            <person name="Bonacorsi S."/>
            <person name="Bouchier C."/>
            <person name="Bouvet O."/>
            <person name="Calteau A."/>
            <person name="Chiapello H."/>
            <person name="Clermont O."/>
            <person name="Cruveiller S."/>
            <person name="Danchin A."/>
            <person name="Diard M."/>
            <person name="Dossat C."/>
            <person name="Karoui M.E."/>
            <person name="Frapy E."/>
            <person name="Garry L."/>
            <person name="Ghigo J.M."/>
            <person name="Gilles A.M."/>
            <person name="Johnson J."/>
            <person name="Le Bouguenec C."/>
            <person name="Lescat M."/>
            <person name="Mangenot S."/>
            <person name="Martinez-Jehanne V."/>
            <person name="Matic I."/>
            <person name="Nassif X."/>
            <person name="Oztas S."/>
            <person name="Petit M.A."/>
            <person name="Pichon C."/>
            <person name="Rouy Z."/>
            <person name="Ruf C.S."/>
            <person name="Schneider D."/>
            <person name="Tourret J."/>
            <person name="Vacherie B."/>
            <person name="Vallenet D."/>
            <person name="Medigue C."/>
            <person name="Rocha E.P.C."/>
            <person name="Denamur E."/>
        </authorList>
    </citation>
    <scope>NUCLEOTIDE SEQUENCE [LARGE SCALE GENOMIC DNA]</scope>
    <source>
        <strain>ATCC 35469 / DSM 13698 / BCRC 15582 / CCUG 18766 / IAM 14443 / JCM 21226 / LMG 7866 / NBRC 102419 / NCTC 12128 / CDC 0568-73</strain>
    </source>
</reference>
<dbReference type="EC" id="3.4.21.88" evidence="1"/>
<dbReference type="EMBL" id="CU928158">
    <property type="protein sequence ID" value="CAQ91556.1"/>
    <property type="molecule type" value="Genomic_DNA"/>
</dbReference>
<dbReference type="RefSeq" id="WP_000646099.1">
    <property type="nucleotide sequence ID" value="NC_011740.1"/>
</dbReference>
<dbReference type="SMR" id="B7LL15"/>
<dbReference type="MEROPS" id="S24.001"/>
<dbReference type="GeneID" id="75059280"/>
<dbReference type="KEGG" id="efe:EFER_4134"/>
<dbReference type="HOGENOM" id="CLU_066192_45_3_6"/>
<dbReference type="OrthoDB" id="9802364at2"/>
<dbReference type="Proteomes" id="UP000000745">
    <property type="component" value="Chromosome"/>
</dbReference>
<dbReference type="GO" id="GO:0003677">
    <property type="term" value="F:DNA binding"/>
    <property type="evidence" value="ECO:0007669"/>
    <property type="project" value="UniProtKB-UniRule"/>
</dbReference>
<dbReference type="GO" id="GO:0004252">
    <property type="term" value="F:serine-type endopeptidase activity"/>
    <property type="evidence" value="ECO:0007669"/>
    <property type="project" value="UniProtKB-UniRule"/>
</dbReference>
<dbReference type="GO" id="GO:0006281">
    <property type="term" value="P:DNA repair"/>
    <property type="evidence" value="ECO:0007669"/>
    <property type="project" value="UniProtKB-UniRule"/>
</dbReference>
<dbReference type="GO" id="GO:0006260">
    <property type="term" value="P:DNA replication"/>
    <property type="evidence" value="ECO:0007669"/>
    <property type="project" value="UniProtKB-UniRule"/>
</dbReference>
<dbReference type="GO" id="GO:0045892">
    <property type="term" value="P:negative regulation of DNA-templated transcription"/>
    <property type="evidence" value="ECO:0007669"/>
    <property type="project" value="UniProtKB-UniRule"/>
</dbReference>
<dbReference type="GO" id="GO:0006508">
    <property type="term" value="P:proteolysis"/>
    <property type="evidence" value="ECO:0007669"/>
    <property type="project" value="InterPro"/>
</dbReference>
<dbReference type="GO" id="GO:0009432">
    <property type="term" value="P:SOS response"/>
    <property type="evidence" value="ECO:0007669"/>
    <property type="project" value="UniProtKB-UniRule"/>
</dbReference>
<dbReference type="CDD" id="cd06529">
    <property type="entry name" value="S24_LexA-like"/>
    <property type="match status" value="1"/>
</dbReference>
<dbReference type="FunFam" id="1.10.10.10:FF:000009">
    <property type="entry name" value="LexA repressor"/>
    <property type="match status" value="1"/>
</dbReference>
<dbReference type="FunFam" id="2.10.109.10:FF:000001">
    <property type="entry name" value="LexA repressor"/>
    <property type="match status" value="1"/>
</dbReference>
<dbReference type="Gene3D" id="2.10.109.10">
    <property type="entry name" value="Umud Fragment, subunit A"/>
    <property type="match status" value="1"/>
</dbReference>
<dbReference type="Gene3D" id="1.10.10.10">
    <property type="entry name" value="Winged helix-like DNA-binding domain superfamily/Winged helix DNA-binding domain"/>
    <property type="match status" value="1"/>
</dbReference>
<dbReference type="HAMAP" id="MF_00015">
    <property type="entry name" value="LexA"/>
    <property type="match status" value="1"/>
</dbReference>
<dbReference type="InterPro" id="IPR006200">
    <property type="entry name" value="LexA"/>
</dbReference>
<dbReference type="InterPro" id="IPR039418">
    <property type="entry name" value="LexA-like"/>
</dbReference>
<dbReference type="InterPro" id="IPR036286">
    <property type="entry name" value="LexA/Signal_pep-like_sf"/>
</dbReference>
<dbReference type="InterPro" id="IPR006199">
    <property type="entry name" value="LexA_DNA-bd_dom"/>
</dbReference>
<dbReference type="InterPro" id="IPR050077">
    <property type="entry name" value="LexA_repressor"/>
</dbReference>
<dbReference type="InterPro" id="IPR006197">
    <property type="entry name" value="Peptidase_S24_LexA"/>
</dbReference>
<dbReference type="InterPro" id="IPR015927">
    <property type="entry name" value="Peptidase_S24_S26A/B/C"/>
</dbReference>
<dbReference type="InterPro" id="IPR036388">
    <property type="entry name" value="WH-like_DNA-bd_sf"/>
</dbReference>
<dbReference type="InterPro" id="IPR036390">
    <property type="entry name" value="WH_DNA-bd_sf"/>
</dbReference>
<dbReference type="NCBIfam" id="TIGR00498">
    <property type="entry name" value="lexA"/>
    <property type="match status" value="1"/>
</dbReference>
<dbReference type="PANTHER" id="PTHR33516">
    <property type="entry name" value="LEXA REPRESSOR"/>
    <property type="match status" value="1"/>
</dbReference>
<dbReference type="PANTHER" id="PTHR33516:SF2">
    <property type="entry name" value="LEXA REPRESSOR-RELATED"/>
    <property type="match status" value="1"/>
</dbReference>
<dbReference type="Pfam" id="PF01726">
    <property type="entry name" value="LexA_DNA_bind"/>
    <property type="match status" value="1"/>
</dbReference>
<dbReference type="Pfam" id="PF00717">
    <property type="entry name" value="Peptidase_S24"/>
    <property type="match status" value="1"/>
</dbReference>
<dbReference type="PRINTS" id="PR00726">
    <property type="entry name" value="LEXASERPTASE"/>
</dbReference>
<dbReference type="SUPFAM" id="SSF51306">
    <property type="entry name" value="LexA/Signal peptidase"/>
    <property type="match status" value="1"/>
</dbReference>
<dbReference type="SUPFAM" id="SSF46785">
    <property type="entry name" value="Winged helix' DNA-binding domain"/>
    <property type="match status" value="1"/>
</dbReference>
<proteinExistence type="inferred from homology"/>
<protein>
    <recommendedName>
        <fullName evidence="1">LexA repressor</fullName>
        <ecNumber evidence="1">3.4.21.88</ecNumber>
    </recommendedName>
</protein>
<sequence>MKALTVRQQEVFDLIRDHISQTGMPPTRAEIAQRLGFRSPNAAEEHLKALARKGVIEIVSGASRGIRLLQEEEEGLPLVGRVAAGEPLLAQQHIEGHYQVDPSLFKPNADFLLRVSGMSMKDIGIMDGDLLAVHKTQDVRNGQVVVARIDDEVTVKRLKKQGNKVELLPENSEFKPIVVDLRQQNFTIEGLAVGVIRNGDWL</sequence>
<organism>
    <name type="scientific">Escherichia fergusonii (strain ATCC 35469 / DSM 13698 / CCUG 18766 / IAM 14443 / JCM 21226 / LMG 7866 / NBRC 102419 / NCTC 12128 / CDC 0568-73)</name>
    <dbReference type="NCBI Taxonomy" id="585054"/>
    <lineage>
        <taxon>Bacteria</taxon>
        <taxon>Pseudomonadati</taxon>
        <taxon>Pseudomonadota</taxon>
        <taxon>Gammaproteobacteria</taxon>
        <taxon>Enterobacterales</taxon>
        <taxon>Enterobacteriaceae</taxon>
        <taxon>Escherichia</taxon>
    </lineage>
</organism>